<name>T2FB_YEAST</name>
<reference key="1">
    <citation type="journal article" date="1994" name="Genes Dev.">
        <title>TFIIF-TAF-RNA polymerase II connection.</title>
        <authorList>
            <person name="Henry N.L."/>
            <person name="Campbell A.M."/>
            <person name="Feaver W.J."/>
            <person name="Poon D."/>
            <person name="Weil P.A."/>
            <person name="Kornberg R.D."/>
        </authorList>
    </citation>
    <scope>NUCLEOTIDE SEQUENCE [GENOMIC DNA]</scope>
    <scope>PROTEIN SEQUENCE OF 250-279 AND 349-356</scope>
    <source>
        <strain>ATCC 208279 / BJ926</strain>
    </source>
</reference>
<reference key="2">
    <citation type="journal article" date="1997" name="Nature">
        <title>The nucleotide sequence of Saccharomyces cerevisiae chromosome VII.</title>
        <authorList>
            <person name="Tettelin H."/>
            <person name="Agostoni-Carbone M.L."/>
            <person name="Albermann K."/>
            <person name="Albers M."/>
            <person name="Arroyo J."/>
            <person name="Backes U."/>
            <person name="Barreiros T."/>
            <person name="Bertani I."/>
            <person name="Bjourson A.J."/>
            <person name="Brueckner M."/>
            <person name="Bruschi C.V."/>
            <person name="Carignani G."/>
            <person name="Castagnoli L."/>
            <person name="Cerdan E."/>
            <person name="Clemente M.L."/>
            <person name="Coblenz A."/>
            <person name="Coglievina M."/>
            <person name="Coissac E."/>
            <person name="Defoor E."/>
            <person name="Del Bino S."/>
            <person name="Delius H."/>
            <person name="Delneri D."/>
            <person name="de Wergifosse P."/>
            <person name="Dujon B."/>
            <person name="Durand P."/>
            <person name="Entian K.-D."/>
            <person name="Eraso P."/>
            <person name="Escribano V."/>
            <person name="Fabiani L."/>
            <person name="Fartmann B."/>
            <person name="Feroli F."/>
            <person name="Feuermann M."/>
            <person name="Frontali L."/>
            <person name="Garcia-Gonzalez M."/>
            <person name="Garcia-Saez M.I."/>
            <person name="Goffeau A."/>
            <person name="Guerreiro P."/>
            <person name="Hani J."/>
            <person name="Hansen M."/>
            <person name="Hebling U."/>
            <person name="Hernandez K."/>
            <person name="Heumann K."/>
            <person name="Hilger F."/>
            <person name="Hofmann B."/>
            <person name="Indge K.J."/>
            <person name="James C.M."/>
            <person name="Klima R."/>
            <person name="Koetter P."/>
            <person name="Kramer B."/>
            <person name="Kramer W."/>
            <person name="Lauquin G."/>
            <person name="Leuther H."/>
            <person name="Louis E.J."/>
            <person name="Maillier E."/>
            <person name="Marconi A."/>
            <person name="Martegani E."/>
            <person name="Mazon M.J."/>
            <person name="Mazzoni C."/>
            <person name="McReynolds A.D.K."/>
            <person name="Melchioretto P."/>
            <person name="Mewes H.-W."/>
            <person name="Minenkova O."/>
            <person name="Mueller-Auer S."/>
            <person name="Nawrocki A."/>
            <person name="Netter P."/>
            <person name="Neu R."/>
            <person name="Nombela C."/>
            <person name="Oliver S.G."/>
            <person name="Panzeri L."/>
            <person name="Paoluzi S."/>
            <person name="Plevani P."/>
            <person name="Portetelle D."/>
            <person name="Portillo F."/>
            <person name="Potier S."/>
            <person name="Purnelle B."/>
            <person name="Rieger M."/>
            <person name="Riles L."/>
            <person name="Rinaldi T."/>
            <person name="Robben J."/>
            <person name="Rodrigues-Pousada C."/>
            <person name="Rodriguez-Belmonte E."/>
            <person name="Rodriguez-Torres A.M."/>
            <person name="Rose M."/>
            <person name="Ruzzi M."/>
            <person name="Saliola M."/>
            <person name="Sanchez-Perez M."/>
            <person name="Schaefer B."/>
            <person name="Schaefer M."/>
            <person name="Scharfe M."/>
            <person name="Schmidheini T."/>
            <person name="Schreer A."/>
            <person name="Skala J."/>
            <person name="Souciet J.-L."/>
            <person name="Steensma H.Y."/>
            <person name="Talla E."/>
            <person name="Thierry A."/>
            <person name="Vandenbol M."/>
            <person name="van der Aart Q.J.M."/>
            <person name="Van Dyck L."/>
            <person name="Vanoni M."/>
            <person name="Verhasselt P."/>
            <person name="Voet M."/>
            <person name="Volckaert G."/>
            <person name="Wambutt R."/>
            <person name="Watson M.D."/>
            <person name="Weber N."/>
            <person name="Wedler E."/>
            <person name="Wedler H."/>
            <person name="Wipfli P."/>
            <person name="Wolf K."/>
            <person name="Wright L.F."/>
            <person name="Zaccaria P."/>
            <person name="Zimmermann M."/>
            <person name="Zollner A."/>
            <person name="Kleine K."/>
        </authorList>
    </citation>
    <scope>NUCLEOTIDE SEQUENCE [LARGE SCALE GENOMIC DNA]</scope>
    <source>
        <strain>ATCC 204508 / S288c</strain>
    </source>
</reference>
<reference key="3">
    <citation type="journal article" date="2014" name="G3 (Bethesda)">
        <title>The reference genome sequence of Saccharomyces cerevisiae: Then and now.</title>
        <authorList>
            <person name="Engel S.R."/>
            <person name="Dietrich F.S."/>
            <person name="Fisk D.G."/>
            <person name="Binkley G."/>
            <person name="Balakrishnan R."/>
            <person name="Costanzo M.C."/>
            <person name="Dwight S.S."/>
            <person name="Hitz B.C."/>
            <person name="Karra K."/>
            <person name="Nash R.S."/>
            <person name="Weng S."/>
            <person name="Wong E.D."/>
            <person name="Lloyd P."/>
            <person name="Skrzypek M.S."/>
            <person name="Miyasato S.R."/>
            <person name="Simison M."/>
            <person name="Cherry J.M."/>
        </authorList>
    </citation>
    <scope>GENOME REANNOTATION</scope>
    <source>
        <strain>ATCC 204508 / S288c</strain>
    </source>
</reference>
<reference key="4">
    <citation type="journal article" date="2007" name="Genome Res.">
        <title>Approaching a complete repository of sequence-verified protein-encoding clones for Saccharomyces cerevisiae.</title>
        <authorList>
            <person name="Hu Y."/>
            <person name="Rolfs A."/>
            <person name="Bhullar B."/>
            <person name="Murthy T.V.S."/>
            <person name="Zhu C."/>
            <person name="Berger M.F."/>
            <person name="Camargo A.A."/>
            <person name="Kelley F."/>
            <person name="McCarron S."/>
            <person name="Jepson D."/>
            <person name="Richardson A."/>
            <person name="Raphael J."/>
            <person name="Moreira D."/>
            <person name="Taycher E."/>
            <person name="Zuo D."/>
            <person name="Mohr S."/>
            <person name="Kane M.F."/>
            <person name="Williamson J."/>
            <person name="Simpson A.J.G."/>
            <person name="Bulyk M.L."/>
            <person name="Harlow E."/>
            <person name="Marsischky G."/>
            <person name="Kolodner R.D."/>
            <person name="LaBaer J."/>
        </authorList>
    </citation>
    <scope>NUCLEOTIDE SEQUENCE [GENOMIC DNA]</scope>
    <source>
        <strain>ATCC 204508 / S288c</strain>
    </source>
</reference>
<reference key="5">
    <citation type="journal article" date="1992" name="J. Biol. Chem.">
        <title>Purification and characterization of yeast RNA polymerase II general initiation factor g.</title>
        <authorList>
            <person name="Henry N.L."/>
            <person name="Sayre M.H."/>
            <person name="Kornberg R.D."/>
        </authorList>
    </citation>
    <scope>CHARACTERIZATION</scope>
</reference>
<reference key="6">
    <citation type="journal article" date="2003" name="Nature">
        <title>Global analysis of protein expression in yeast.</title>
        <authorList>
            <person name="Ghaemmaghami S."/>
            <person name="Huh W.-K."/>
            <person name="Bower K."/>
            <person name="Howson R.W."/>
            <person name="Belle A."/>
            <person name="Dephoure N."/>
            <person name="O'Shea E.K."/>
            <person name="Weissman J.S."/>
        </authorList>
    </citation>
    <scope>LEVEL OF PROTEIN EXPRESSION [LARGE SCALE ANALYSIS]</scope>
</reference>
<reference key="7">
    <citation type="journal article" date="2008" name="Mol. Cell. Proteomics">
        <title>A multidimensional chromatography technology for in-depth phosphoproteome analysis.</title>
        <authorList>
            <person name="Albuquerque C.P."/>
            <person name="Smolka M.B."/>
            <person name="Payne S.H."/>
            <person name="Bafna V."/>
            <person name="Eng J."/>
            <person name="Zhou H."/>
        </authorList>
    </citation>
    <scope>PHOSPHORYLATION [LARGE SCALE ANALYSIS] AT SER-56</scope>
    <scope>IDENTIFICATION BY MASS SPECTROMETRY [LARGE SCALE ANALYSIS]</scope>
</reference>
<reference key="8">
    <citation type="journal article" date="2009" name="Science">
        <title>Global analysis of Cdk1 substrate phosphorylation sites provides insights into evolution.</title>
        <authorList>
            <person name="Holt L.J."/>
            <person name="Tuch B.B."/>
            <person name="Villen J."/>
            <person name="Johnson A.D."/>
            <person name="Gygi S.P."/>
            <person name="Morgan D.O."/>
        </authorList>
    </citation>
    <scope>PHOSPHORYLATION [LARGE SCALE ANALYSIS] AT SER-28 AND SER-34</scope>
    <scope>IDENTIFICATION BY MASS SPECTROMETRY [LARGE SCALE ANALYSIS]</scope>
</reference>
<protein>
    <recommendedName>
        <fullName>Transcription initiation factor IIF subunit beta</fullName>
    </recommendedName>
    <alternativeName>
        <fullName>TFIIF medium subunit</fullName>
    </alternativeName>
    <alternativeName>
        <fullName>TFIIF-beta</fullName>
    </alternativeName>
    <alternativeName>
        <fullName>Transcription factor G 54 kDa subunit</fullName>
    </alternativeName>
</protein>
<proteinExistence type="evidence at protein level"/>
<gene>
    <name type="primary">TFG2</name>
    <name type="ordered locus">YGR005C</name>
</gene>
<organism>
    <name type="scientific">Saccharomyces cerevisiae (strain ATCC 204508 / S288c)</name>
    <name type="common">Baker's yeast</name>
    <dbReference type="NCBI Taxonomy" id="559292"/>
    <lineage>
        <taxon>Eukaryota</taxon>
        <taxon>Fungi</taxon>
        <taxon>Dikarya</taxon>
        <taxon>Ascomycota</taxon>
        <taxon>Saccharomycotina</taxon>
        <taxon>Saccharomycetes</taxon>
        <taxon>Saccharomycetales</taxon>
        <taxon>Saccharomycetaceae</taxon>
        <taxon>Saccharomyces</taxon>
    </lineage>
</organism>
<dbReference type="EMBL" id="U13016">
    <property type="protein sequence ID" value="AAA61642.1"/>
    <property type="molecule type" value="Genomic_DNA"/>
</dbReference>
<dbReference type="EMBL" id="Z72790">
    <property type="protein sequence ID" value="CAA96988.1"/>
    <property type="molecule type" value="Genomic_DNA"/>
</dbReference>
<dbReference type="EMBL" id="AY692871">
    <property type="protein sequence ID" value="AAT92890.1"/>
    <property type="molecule type" value="Genomic_DNA"/>
</dbReference>
<dbReference type="EMBL" id="BK006941">
    <property type="protein sequence ID" value="DAA08103.1"/>
    <property type="molecule type" value="Genomic_DNA"/>
</dbReference>
<dbReference type="PIR" id="S64294">
    <property type="entry name" value="S64294"/>
</dbReference>
<dbReference type="RefSeq" id="NP_011519.3">
    <property type="nucleotide sequence ID" value="NM_001181134.3"/>
</dbReference>
<dbReference type="PDB" id="4V1N">
    <property type="method" value="EM"/>
    <property type="resolution" value="7.80 A"/>
    <property type="chains" value="R=1-400"/>
</dbReference>
<dbReference type="PDB" id="4V1O">
    <property type="method" value="EM"/>
    <property type="resolution" value="9.70 A"/>
    <property type="chains" value="R=1-400"/>
</dbReference>
<dbReference type="PDB" id="5FMF">
    <property type="method" value="EM"/>
    <property type="resolution" value="6.00 A"/>
    <property type="chains" value="V=54-140, V=210-227, V=291-359"/>
</dbReference>
<dbReference type="PDB" id="5FYW">
    <property type="method" value="EM"/>
    <property type="resolution" value="4.35 A"/>
    <property type="chains" value="R=1-400"/>
</dbReference>
<dbReference type="PDB" id="5FZ5">
    <property type="method" value="EM"/>
    <property type="resolution" value="8.80 A"/>
    <property type="chains" value="R=1-400"/>
</dbReference>
<dbReference type="PDB" id="5OQJ">
    <property type="method" value="EM"/>
    <property type="resolution" value="4.70 A"/>
    <property type="chains" value="R=1-400"/>
</dbReference>
<dbReference type="PDB" id="5OQM">
    <property type="method" value="EM"/>
    <property type="resolution" value="5.80 A"/>
    <property type="chains" value="R=1-400"/>
</dbReference>
<dbReference type="PDB" id="5SVA">
    <property type="method" value="EM"/>
    <property type="resolution" value="15.30 A"/>
    <property type="chains" value="g=1-400"/>
</dbReference>
<dbReference type="PDB" id="6GYK">
    <property type="method" value="EM"/>
    <property type="resolution" value="5.10 A"/>
    <property type="chains" value="R=1-400"/>
</dbReference>
<dbReference type="PDB" id="6GYL">
    <property type="method" value="EM"/>
    <property type="resolution" value="4.80 A"/>
    <property type="chains" value="R=1-400"/>
</dbReference>
<dbReference type="PDB" id="6GYM">
    <property type="method" value="EM"/>
    <property type="resolution" value="6.70 A"/>
    <property type="chains" value="R=1-400"/>
</dbReference>
<dbReference type="PDB" id="7MEI">
    <property type="method" value="EM"/>
    <property type="resolution" value="3.54 A"/>
    <property type="chains" value="M=1-400"/>
</dbReference>
<dbReference type="PDB" id="7MK9">
    <property type="method" value="EM"/>
    <property type="resolution" value="3.54 A"/>
    <property type="chains" value="M=1-400"/>
</dbReference>
<dbReference type="PDB" id="7ML0">
    <property type="method" value="EM"/>
    <property type="resolution" value="3.00 A"/>
    <property type="chains" value="R=1-400"/>
</dbReference>
<dbReference type="PDB" id="7ML1">
    <property type="method" value="EM"/>
    <property type="resolution" value="4.00 A"/>
    <property type="chains" value="R=1-400"/>
</dbReference>
<dbReference type="PDB" id="7ML2">
    <property type="method" value="EM"/>
    <property type="resolution" value="3.40 A"/>
    <property type="chains" value="R=1-400"/>
</dbReference>
<dbReference type="PDB" id="7ML4">
    <property type="method" value="EM"/>
    <property type="resolution" value="3.10 A"/>
    <property type="chains" value="R=1-400"/>
</dbReference>
<dbReference type="PDB" id="7O4I">
    <property type="method" value="EM"/>
    <property type="resolution" value="3.20 A"/>
    <property type="chains" value="R=1-400"/>
</dbReference>
<dbReference type="PDB" id="7O4J">
    <property type="method" value="EM"/>
    <property type="resolution" value="2.90 A"/>
    <property type="chains" value="R=1-400"/>
</dbReference>
<dbReference type="PDB" id="7O72">
    <property type="method" value="EM"/>
    <property type="resolution" value="3.40 A"/>
    <property type="chains" value="R=1-400"/>
</dbReference>
<dbReference type="PDB" id="7O73">
    <property type="method" value="EM"/>
    <property type="resolution" value="3.40 A"/>
    <property type="chains" value="R=1-400"/>
</dbReference>
<dbReference type="PDB" id="7O75">
    <property type="method" value="EM"/>
    <property type="resolution" value="3.20 A"/>
    <property type="chains" value="R=1-400"/>
</dbReference>
<dbReference type="PDB" id="7UI9">
    <property type="method" value="EM"/>
    <property type="resolution" value="3.30 A"/>
    <property type="chains" value="Q=1-400"/>
</dbReference>
<dbReference type="PDB" id="7UIF">
    <property type="method" value="EM"/>
    <property type="resolution" value="4.60 A"/>
    <property type="chains" value="Q=1-400"/>
</dbReference>
<dbReference type="PDB" id="7UIO">
    <property type="method" value="EM"/>
    <property type="resolution" value="3.30 A"/>
    <property type="chains" value="AQ/BQ=1-400"/>
</dbReference>
<dbReference type="PDB" id="7ZS9">
    <property type="method" value="EM"/>
    <property type="resolution" value="3.10 A"/>
    <property type="chains" value="R=1-400"/>
</dbReference>
<dbReference type="PDB" id="7ZSA">
    <property type="method" value="EM"/>
    <property type="resolution" value="4.00 A"/>
    <property type="chains" value="R=1-400"/>
</dbReference>
<dbReference type="PDB" id="7ZSB">
    <property type="method" value="EM"/>
    <property type="resolution" value="6.60 A"/>
    <property type="chains" value="R=1-400"/>
</dbReference>
<dbReference type="PDB" id="8CEN">
    <property type="method" value="EM"/>
    <property type="resolution" value="3.00 A"/>
    <property type="chains" value="R=1-400"/>
</dbReference>
<dbReference type="PDB" id="8CEO">
    <property type="method" value="EM"/>
    <property type="resolution" value="3.60 A"/>
    <property type="chains" value="R=1-400"/>
</dbReference>
<dbReference type="PDB" id="8UMH">
    <property type="method" value="EM"/>
    <property type="resolution" value="4.10 A"/>
    <property type="chains" value="P=1-400"/>
</dbReference>
<dbReference type="PDB" id="8UMI">
    <property type="method" value="EM"/>
    <property type="resolution" value="3.70 A"/>
    <property type="chains" value="P=1-400"/>
</dbReference>
<dbReference type="PDB" id="8UOQ">
    <property type="method" value="EM"/>
    <property type="resolution" value="3.80 A"/>
    <property type="chains" value="P=1-400"/>
</dbReference>
<dbReference type="PDB" id="8UOT">
    <property type="method" value="EM"/>
    <property type="resolution" value="3.70 A"/>
    <property type="chains" value="P=1-400"/>
</dbReference>
<dbReference type="PDBsum" id="4V1N"/>
<dbReference type="PDBsum" id="4V1O"/>
<dbReference type="PDBsum" id="5FMF"/>
<dbReference type="PDBsum" id="5FYW"/>
<dbReference type="PDBsum" id="5FZ5"/>
<dbReference type="PDBsum" id="5OQJ"/>
<dbReference type="PDBsum" id="5OQM"/>
<dbReference type="PDBsum" id="5SVA"/>
<dbReference type="PDBsum" id="6GYK"/>
<dbReference type="PDBsum" id="6GYL"/>
<dbReference type="PDBsum" id="6GYM"/>
<dbReference type="PDBsum" id="7MEI"/>
<dbReference type="PDBsum" id="7MK9"/>
<dbReference type="PDBsum" id="7ML0"/>
<dbReference type="PDBsum" id="7ML1"/>
<dbReference type="PDBsum" id="7ML2"/>
<dbReference type="PDBsum" id="7ML4"/>
<dbReference type="PDBsum" id="7O4I"/>
<dbReference type="PDBsum" id="7O4J"/>
<dbReference type="PDBsum" id="7O72"/>
<dbReference type="PDBsum" id="7O73"/>
<dbReference type="PDBsum" id="7O75"/>
<dbReference type="PDBsum" id="7UI9"/>
<dbReference type="PDBsum" id="7UIF"/>
<dbReference type="PDBsum" id="7UIO"/>
<dbReference type="PDBsum" id="7ZS9"/>
<dbReference type="PDBsum" id="7ZSA"/>
<dbReference type="PDBsum" id="7ZSB"/>
<dbReference type="PDBsum" id="8CEN"/>
<dbReference type="PDBsum" id="8CEO"/>
<dbReference type="PDBsum" id="8UMH"/>
<dbReference type="PDBsum" id="8UMI"/>
<dbReference type="PDBsum" id="8UOQ"/>
<dbReference type="PDBsum" id="8UOT"/>
<dbReference type="BMRB" id="P41896"/>
<dbReference type="EMDB" id="EMD-0090"/>
<dbReference type="EMDB" id="EMD-0091"/>
<dbReference type="EMDB" id="EMD-0092"/>
<dbReference type="EMDB" id="EMD-12719"/>
<dbReference type="EMDB" id="EMD-12720"/>
<dbReference type="EMDB" id="EMD-12743"/>
<dbReference type="EMDB" id="EMD-12744"/>
<dbReference type="EMDB" id="EMD-12745"/>
<dbReference type="EMDB" id="EMD-14927"/>
<dbReference type="EMDB" id="EMD-14928"/>
<dbReference type="EMDB" id="EMD-14929"/>
<dbReference type="EMDB" id="EMD-16610"/>
<dbReference type="EMDB" id="EMD-16611"/>
<dbReference type="EMDB" id="EMD-26542"/>
<dbReference type="EMDB" id="EMD-26544"/>
<dbReference type="EMDB" id="EMD-26551"/>
<dbReference type="EMDB" id="EMD-2785"/>
<dbReference type="EMDB" id="EMD-2786"/>
<dbReference type="EMDB" id="EMD-3846"/>
<dbReference type="EMDB" id="EMD-3850"/>
<dbReference type="EMDB" id="EMD-42437"/>
<dbReference type="EMDB" id="EMD-42438"/>
<dbReference type="EMDB" id="EMD-8305"/>
<dbReference type="SMR" id="P41896"/>
<dbReference type="BioGRID" id="33249">
    <property type="interactions" value="260"/>
</dbReference>
<dbReference type="ComplexPortal" id="CPX-1149">
    <property type="entry name" value="General transcription factor TFIIF complex"/>
</dbReference>
<dbReference type="DIP" id="DIP-1152N"/>
<dbReference type="FunCoup" id="P41896">
    <property type="interactions" value="607"/>
</dbReference>
<dbReference type="IntAct" id="P41896">
    <property type="interactions" value="37"/>
</dbReference>
<dbReference type="MINT" id="P41896"/>
<dbReference type="STRING" id="4932.YGR005C"/>
<dbReference type="iPTMnet" id="P41896"/>
<dbReference type="PaxDb" id="4932-YGR005C"/>
<dbReference type="PeptideAtlas" id="P41896"/>
<dbReference type="EnsemblFungi" id="YGR005C_mRNA">
    <property type="protein sequence ID" value="YGR005C"/>
    <property type="gene ID" value="YGR005C"/>
</dbReference>
<dbReference type="GeneID" id="852888"/>
<dbReference type="KEGG" id="sce:YGR005C"/>
<dbReference type="AGR" id="SGD:S000003237"/>
<dbReference type="SGD" id="S000003237">
    <property type="gene designation" value="TFG2"/>
</dbReference>
<dbReference type="VEuPathDB" id="FungiDB:YGR005C"/>
<dbReference type="eggNOG" id="KOG2905">
    <property type="taxonomic scope" value="Eukaryota"/>
</dbReference>
<dbReference type="GeneTree" id="ENSGT00390000016051"/>
<dbReference type="HOGENOM" id="CLU_047858_0_1_1"/>
<dbReference type="InParanoid" id="P41896"/>
<dbReference type="OMA" id="ANCPEHQ"/>
<dbReference type="OrthoDB" id="26094at2759"/>
<dbReference type="BioCyc" id="YEAST:G3O-30736-MONOMER"/>
<dbReference type="Reactome" id="R-SCE-113418">
    <property type="pathway name" value="Formation of the Early Elongation Complex"/>
</dbReference>
<dbReference type="Reactome" id="R-SCE-674695">
    <property type="pathway name" value="RNA Polymerase II Pre-transcription Events"/>
</dbReference>
<dbReference type="Reactome" id="R-SCE-6796648">
    <property type="pathway name" value="TP53 Regulates Transcription of DNA Repair Genes"/>
</dbReference>
<dbReference type="Reactome" id="R-SCE-6807505">
    <property type="pathway name" value="RNA polymerase II transcribes snRNA genes"/>
</dbReference>
<dbReference type="Reactome" id="R-SCE-72086">
    <property type="pathway name" value="mRNA Capping"/>
</dbReference>
<dbReference type="Reactome" id="R-SCE-72203">
    <property type="pathway name" value="Processing of Capped Intron-Containing Pre-mRNA"/>
</dbReference>
<dbReference type="Reactome" id="R-SCE-73776">
    <property type="pathway name" value="RNA Polymerase II Promoter Escape"/>
</dbReference>
<dbReference type="Reactome" id="R-SCE-73779">
    <property type="pathway name" value="RNA Polymerase II Transcription Pre-Initiation And Promoter Opening"/>
</dbReference>
<dbReference type="Reactome" id="R-SCE-75953">
    <property type="pathway name" value="RNA Polymerase II Transcription Initiation"/>
</dbReference>
<dbReference type="Reactome" id="R-SCE-76042">
    <property type="pathway name" value="RNA Polymerase II Transcription Initiation And Promoter Clearance"/>
</dbReference>
<dbReference type="Reactome" id="R-SCE-77075">
    <property type="pathway name" value="RNA Pol II CTD phosphorylation and interaction with CE"/>
</dbReference>
<dbReference type="Reactome" id="R-SCE-9018519">
    <property type="pathway name" value="Estrogen-dependent gene expression"/>
</dbReference>
<dbReference type="BioGRID-ORCS" id="852888">
    <property type="hits" value="1 hit in 10 CRISPR screens"/>
</dbReference>
<dbReference type="EvolutionaryTrace" id="P41896"/>
<dbReference type="PRO" id="PR:P41896"/>
<dbReference type="Proteomes" id="UP000002311">
    <property type="component" value="Chromosome VII"/>
</dbReference>
<dbReference type="RNAct" id="P41896">
    <property type="molecule type" value="protein"/>
</dbReference>
<dbReference type="GO" id="GO:0005634">
    <property type="term" value="C:nucleus"/>
    <property type="evidence" value="ECO:0000314"/>
    <property type="project" value="ComplexPortal"/>
</dbReference>
<dbReference type="GO" id="GO:0005674">
    <property type="term" value="C:transcription factor TFIIF complex"/>
    <property type="evidence" value="ECO:0000314"/>
    <property type="project" value="SGD"/>
</dbReference>
<dbReference type="GO" id="GO:0003677">
    <property type="term" value="F:DNA binding"/>
    <property type="evidence" value="ECO:0007669"/>
    <property type="project" value="UniProtKB-KW"/>
</dbReference>
<dbReference type="GO" id="GO:0000166">
    <property type="term" value="F:nucleotide binding"/>
    <property type="evidence" value="ECO:0007669"/>
    <property type="project" value="UniProtKB-KW"/>
</dbReference>
<dbReference type="GO" id="GO:0000993">
    <property type="term" value="F:RNA polymerase II complex binding"/>
    <property type="evidence" value="ECO:0000314"/>
    <property type="project" value="SGD"/>
</dbReference>
<dbReference type="GO" id="GO:0006355">
    <property type="term" value="P:regulation of DNA-templated transcription"/>
    <property type="evidence" value="ECO:0000314"/>
    <property type="project" value="ComplexPortal"/>
</dbReference>
<dbReference type="GO" id="GO:0051123">
    <property type="term" value="P:RNA polymerase II preinitiation complex assembly"/>
    <property type="evidence" value="ECO:0000353"/>
    <property type="project" value="ComplexPortal"/>
</dbReference>
<dbReference type="GO" id="GO:0006368">
    <property type="term" value="P:transcription elongation by RNA polymerase II"/>
    <property type="evidence" value="ECO:0000314"/>
    <property type="project" value="SGD"/>
</dbReference>
<dbReference type="GO" id="GO:0006367">
    <property type="term" value="P:transcription initiation at RNA polymerase II promoter"/>
    <property type="evidence" value="ECO:0000314"/>
    <property type="project" value="SGD"/>
</dbReference>
<dbReference type="GO" id="GO:0001174">
    <property type="term" value="P:transcriptional start site selection at RNA polymerase II promoter"/>
    <property type="evidence" value="ECO:0000315"/>
    <property type="project" value="SGD"/>
</dbReference>
<dbReference type="CDD" id="cd07980">
    <property type="entry name" value="TFIIF_beta"/>
    <property type="match status" value="1"/>
</dbReference>
<dbReference type="FunFam" id="1.10.10.10:FF:000035">
    <property type="entry name" value="General transcription factor IIF subunit 2"/>
    <property type="match status" value="1"/>
</dbReference>
<dbReference type="Gene3D" id="1.10.10.10">
    <property type="entry name" value="Winged helix-like DNA-binding domain superfamily/Winged helix DNA-binding domain"/>
    <property type="match status" value="1"/>
</dbReference>
<dbReference type="InterPro" id="IPR003196">
    <property type="entry name" value="TFIIF_beta"/>
</dbReference>
<dbReference type="InterPro" id="IPR040450">
    <property type="entry name" value="TFIIF_beta_HTH"/>
</dbReference>
<dbReference type="InterPro" id="IPR040504">
    <property type="entry name" value="TFIIF_beta_N"/>
</dbReference>
<dbReference type="InterPro" id="IPR011039">
    <property type="entry name" value="TFIIF_interaction"/>
</dbReference>
<dbReference type="InterPro" id="IPR036388">
    <property type="entry name" value="WH-like_DNA-bd_sf"/>
</dbReference>
<dbReference type="InterPro" id="IPR036390">
    <property type="entry name" value="WH_DNA-bd_sf"/>
</dbReference>
<dbReference type="PANTHER" id="PTHR10445">
    <property type="entry name" value="GENERAL TRANSCRIPTION FACTOR IIF SUBUNIT 2"/>
    <property type="match status" value="1"/>
</dbReference>
<dbReference type="PANTHER" id="PTHR10445:SF0">
    <property type="entry name" value="GENERAL TRANSCRIPTION FACTOR IIF SUBUNIT 2"/>
    <property type="match status" value="1"/>
</dbReference>
<dbReference type="Pfam" id="PF02270">
    <property type="entry name" value="TFIIF_beta"/>
    <property type="match status" value="1"/>
</dbReference>
<dbReference type="Pfam" id="PF17683">
    <property type="entry name" value="TFIIF_beta_N"/>
    <property type="match status" value="1"/>
</dbReference>
<dbReference type="SUPFAM" id="SSF50916">
    <property type="entry name" value="Rap30/74 interaction domains"/>
    <property type="match status" value="1"/>
</dbReference>
<dbReference type="SUPFAM" id="SSF46785">
    <property type="entry name" value="Winged helix' DNA-binding domain"/>
    <property type="match status" value="1"/>
</dbReference>
<keyword id="KW-0002">3D-structure</keyword>
<keyword id="KW-0903">Direct protein sequencing</keyword>
<keyword id="KW-0238">DNA-binding</keyword>
<keyword id="KW-0547">Nucleotide-binding</keyword>
<keyword id="KW-0539">Nucleus</keyword>
<keyword id="KW-0597">Phosphoprotein</keyword>
<keyword id="KW-1185">Reference proteome</keyword>
<keyword id="KW-0804">Transcription</keyword>
<keyword id="KW-0805">Transcription regulation</keyword>
<feature type="chain" id="PRO_0000211240" description="Transcription initiation factor IIF subunit beta">
    <location>
        <begin position="1"/>
        <end position="400"/>
    </location>
</feature>
<feature type="region of interest" description="Disordered" evidence="2">
    <location>
        <begin position="1"/>
        <end position="47"/>
    </location>
</feature>
<feature type="region of interest" description="Disordered" evidence="2">
    <location>
        <begin position="165"/>
        <end position="194"/>
    </location>
</feature>
<feature type="region of interest" description="Disordered" evidence="2">
    <location>
        <begin position="366"/>
        <end position="400"/>
    </location>
</feature>
<feature type="compositionally biased region" description="Polar residues" evidence="2">
    <location>
        <begin position="1"/>
        <end position="19"/>
    </location>
</feature>
<feature type="compositionally biased region" description="Acidic residues" evidence="2">
    <location>
        <begin position="33"/>
        <end position="47"/>
    </location>
</feature>
<feature type="compositionally biased region" description="Basic residues" evidence="2">
    <location>
        <begin position="174"/>
        <end position="189"/>
    </location>
</feature>
<feature type="compositionally biased region" description="Acidic residues" evidence="2">
    <location>
        <begin position="386"/>
        <end position="400"/>
    </location>
</feature>
<feature type="modified residue" description="Phosphoserine" evidence="6">
    <location>
        <position position="28"/>
    </location>
</feature>
<feature type="modified residue" description="Phosphoserine" evidence="6">
    <location>
        <position position="34"/>
    </location>
</feature>
<feature type="modified residue" description="Phosphoserine" evidence="5">
    <location>
        <position position="56"/>
    </location>
</feature>
<feature type="sequence conflict" description="In Ref. 1; AAA61642." evidence="4" ref="1">
    <original>N</original>
    <variation>H</variation>
    <location>
        <position position="232"/>
    </location>
</feature>
<feature type="helix" evidence="8">
    <location>
        <begin position="49"/>
        <end position="52"/>
    </location>
</feature>
<feature type="turn" evidence="9">
    <location>
        <begin position="62"/>
        <end position="65"/>
    </location>
</feature>
<feature type="strand" evidence="8">
    <location>
        <begin position="67"/>
        <end position="72"/>
    </location>
</feature>
<feature type="helix" evidence="8">
    <location>
        <begin position="75"/>
        <end position="81"/>
    </location>
</feature>
<feature type="strand" evidence="9">
    <location>
        <begin position="84"/>
        <end position="86"/>
    </location>
</feature>
<feature type="strand" evidence="8">
    <location>
        <begin position="91"/>
        <end position="98"/>
    </location>
</feature>
<feature type="turn" evidence="9">
    <location>
        <begin position="99"/>
        <end position="102"/>
    </location>
</feature>
<feature type="strand" evidence="8">
    <location>
        <begin position="104"/>
        <end position="108"/>
    </location>
</feature>
<feature type="helix" evidence="8">
    <location>
        <begin position="110"/>
        <end position="112"/>
    </location>
</feature>
<feature type="strand" evidence="9">
    <location>
        <begin position="114"/>
        <end position="116"/>
    </location>
</feature>
<feature type="strand" evidence="8">
    <location>
        <begin position="118"/>
        <end position="128"/>
    </location>
</feature>
<feature type="strand" evidence="8">
    <location>
        <begin position="131"/>
        <end position="138"/>
    </location>
</feature>
<feature type="strand" evidence="8">
    <location>
        <begin position="211"/>
        <end position="226"/>
    </location>
</feature>
<feature type="turn" evidence="8">
    <location>
        <begin position="231"/>
        <end position="234"/>
    </location>
</feature>
<feature type="helix" evidence="8">
    <location>
        <begin position="235"/>
        <end position="245"/>
    </location>
</feature>
<feature type="strand" evidence="9">
    <location>
        <begin position="253"/>
        <end position="255"/>
    </location>
</feature>
<feature type="helix" evidence="8">
    <location>
        <begin position="259"/>
        <end position="262"/>
    </location>
</feature>
<feature type="helix" evidence="8">
    <location>
        <begin position="263"/>
        <end position="265"/>
    </location>
</feature>
<feature type="strand" evidence="8">
    <location>
        <begin position="266"/>
        <end position="268"/>
    </location>
</feature>
<feature type="helix" evidence="8">
    <location>
        <begin position="280"/>
        <end position="285"/>
    </location>
</feature>
<feature type="helix" evidence="8">
    <location>
        <begin position="296"/>
        <end position="309"/>
    </location>
</feature>
<feature type="strand" evidence="7">
    <location>
        <begin position="311"/>
        <end position="313"/>
    </location>
</feature>
<feature type="helix" evidence="8">
    <location>
        <begin position="315"/>
        <end position="322"/>
    </location>
</feature>
<feature type="helix" evidence="8">
    <location>
        <begin position="326"/>
        <end position="336"/>
    </location>
</feature>
<feature type="strand" evidence="8">
    <location>
        <begin position="337"/>
        <end position="345"/>
    </location>
</feature>
<feature type="strand" evidence="8">
    <location>
        <begin position="348"/>
        <end position="351"/>
    </location>
</feature>
<feature type="helix" evidence="8">
    <location>
        <begin position="353"/>
        <end position="356"/>
    </location>
</feature>
<accession>P41896</accession>
<accession>D6VUE2</accession>
<evidence type="ECO:0000250" key="1"/>
<evidence type="ECO:0000256" key="2">
    <source>
        <dbReference type="SAM" id="MobiDB-lite"/>
    </source>
</evidence>
<evidence type="ECO:0000269" key="3">
    <source>
    </source>
</evidence>
<evidence type="ECO:0000305" key="4"/>
<evidence type="ECO:0007744" key="5">
    <source>
    </source>
</evidence>
<evidence type="ECO:0007744" key="6">
    <source>
    </source>
</evidence>
<evidence type="ECO:0007829" key="7">
    <source>
        <dbReference type="PDB" id="7ML4"/>
    </source>
</evidence>
<evidence type="ECO:0007829" key="8">
    <source>
        <dbReference type="PDB" id="7O4J"/>
    </source>
</evidence>
<evidence type="ECO:0007829" key="9">
    <source>
        <dbReference type="PDB" id="7ZS9"/>
    </source>
</evidence>
<comment type="function">
    <text evidence="1">TFIIF is a general transcription initiation factor that binds to RNA polymerase II. Its functions include the recruitment of RNA polymerase II to the promoter bound DNA-TBP-TFIIB complex, decreasing the affinity of RNA polymerase II for non-specific DNA, allowing for the subsequent recruitment of TFIIE and TFIIH, and facilitating RNA polymerase II elongation.</text>
</comment>
<comment type="subunit">
    <text>TFIIF is composed of three different subunits: TFG1/RAP74, TFG2/RAP30 and TAF14.</text>
</comment>
<comment type="interaction">
    <interactant intactId="EBI-18916">
        <id>P41896</id>
    </interactant>
    <interactant intactId="EBI-9152">
        <id>P38217</id>
        <label>KAP104</label>
    </interactant>
    <organismsDiffer>false</organismsDiffer>
    <experiments>2</experiments>
</comment>
<comment type="interaction">
    <interactant intactId="EBI-18916">
        <id>P41896</id>
    </interactant>
    <interactant intactId="EBI-15767">
        <id>P08518</id>
        <label>RPB2</label>
    </interactant>
    <organismsDiffer>false</organismsDiffer>
    <experiments>8</experiments>
</comment>
<comment type="subcellular location">
    <subcellularLocation>
        <location>Nucleus</location>
    </subcellularLocation>
</comment>
<comment type="miscellaneous">
    <text evidence="3">Present with 520 molecules/cell in log phase SD medium.</text>
</comment>
<comment type="similarity">
    <text evidence="4">Belongs to the TFIIF beta subunit family.</text>
</comment>
<sequence length="400" mass="46605">MSSGSAGAPALSNNSTNSVAKEKSGNISGDEYLSQEEEVFDGNDIENNETKVYEESLDLDLERSNRQVWLVRLPMFLAEKWRDRNNLHGQELGKIRINKDGSKITLLLNENDNDSIPHEYDLELTKKVVENEYVFTEQNLKKYQQRKKELEADPEKQRQAYLKKQEREEELKKKQQQQKRRNNRKKFNHRVMTDRDGRDRYIPYVKTIPKKTAIVGTVCHECQVMPSMNDPNYHKIVEQRRNIVKLNNKERITTLDETVGVTMSHTGMSMRSDNSNFLKVGREKAKSNIKSIRMPKKEILDYLFKLFDEYDYWSLKGLKERTRQPEAHLKECLDKVATLVKKGPYAFKYTLRPEYKKLKEEERKATLGELADEQTGSAGDNAQGDAEADLEDEIEMEDVV</sequence>